<reference key="1">
    <citation type="journal article" date="2005" name="Nature">
        <title>The genome of the social amoeba Dictyostelium discoideum.</title>
        <authorList>
            <person name="Eichinger L."/>
            <person name="Pachebat J.A."/>
            <person name="Gloeckner G."/>
            <person name="Rajandream M.A."/>
            <person name="Sucgang R."/>
            <person name="Berriman M."/>
            <person name="Song J."/>
            <person name="Olsen R."/>
            <person name="Szafranski K."/>
            <person name="Xu Q."/>
            <person name="Tunggal B."/>
            <person name="Kummerfeld S."/>
            <person name="Madera M."/>
            <person name="Konfortov B.A."/>
            <person name="Rivero F."/>
            <person name="Bankier A.T."/>
            <person name="Lehmann R."/>
            <person name="Hamlin N."/>
            <person name="Davies R."/>
            <person name="Gaudet P."/>
            <person name="Fey P."/>
            <person name="Pilcher K."/>
            <person name="Chen G."/>
            <person name="Saunders D."/>
            <person name="Sodergren E.J."/>
            <person name="Davis P."/>
            <person name="Kerhornou A."/>
            <person name="Nie X."/>
            <person name="Hall N."/>
            <person name="Anjard C."/>
            <person name="Hemphill L."/>
            <person name="Bason N."/>
            <person name="Farbrother P."/>
            <person name="Desany B."/>
            <person name="Just E."/>
            <person name="Morio T."/>
            <person name="Rost R."/>
            <person name="Churcher C.M."/>
            <person name="Cooper J."/>
            <person name="Haydock S."/>
            <person name="van Driessche N."/>
            <person name="Cronin A."/>
            <person name="Goodhead I."/>
            <person name="Muzny D.M."/>
            <person name="Mourier T."/>
            <person name="Pain A."/>
            <person name="Lu M."/>
            <person name="Harper D."/>
            <person name="Lindsay R."/>
            <person name="Hauser H."/>
            <person name="James K.D."/>
            <person name="Quiles M."/>
            <person name="Madan Babu M."/>
            <person name="Saito T."/>
            <person name="Buchrieser C."/>
            <person name="Wardroper A."/>
            <person name="Felder M."/>
            <person name="Thangavelu M."/>
            <person name="Johnson D."/>
            <person name="Knights A."/>
            <person name="Loulseged H."/>
            <person name="Mungall K.L."/>
            <person name="Oliver K."/>
            <person name="Price C."/>
            <person name="Quail M.A."/>
            <person name="Urushihara H."/>
            <person name="Hernandez J."/>
            <person name="Rabbinowitsch E."/>
            <person name="Steffen D."/>
            <person name="Sanders M."/>
            <person name="Ma J."/>
            <person name="Kohara Y."/>
            <person name="Sharp S."/>
            <person name="Simmonds M.N."/>
            <person name="Spiegler S."/>
            <person name="Tivey A."/>
            <person name="Sugano S."/>
            <person name="White B."/>
            <person name="Walker D."/>
            <person name="Woodward J.R."/>
            <person name="Winckler T."/>
            <person name="Tanaka Y."/>
            <person name="Shaulsky G."/>
            <person name="Schleicher M."/>
            <person name="Weinstock G.M."/>
            <person name="Rosenthal A."/>
            <person name="Cox E.C."/>
            <person name="Chisholm R.L."/>
            <person name="Gibbs R.A."/>
            <person name="Loomis W.F."/>
            <person name="Platzer M."/>
            <person name="Kay R.R."/>
            <person name="Williams J.G."/>
            <person name="Dear P.H."/>
            <person name="Noegel A.A."/>
            <person name="Barrell B.G."/>
            <person name="Kuspa A."/>
        </authorList>
    </citation>
    <scope>NUCLEOTIDE SEQUENCE [LARGE SCALE GENOMIC DNA]</scope>
    <source>
        <strain>AX4</strain>
    </source>
</reference>
<feature type="chain" id="PRO_0000385369" description="Probable zinc transporter protein DDB_G0283629">
    <location>
        <begin position="1"/>
        <end position="543"/>
    </location>
</feature>
<feature type="topological domain" description="Cytoplasmic" evidence="2">
    <location>
        <begin position="1"/>
        <end position="186"/>
    </location>
</feature>
<feature type="transmembrane region" description="Helical" evidence="2">
    <location>
        <begin position="187"/>
        <end position="207"/>
    </location>
</feature>
<feature type="topological domain" description="Extracellular" evidence="2">
    <location>
        <begin position="208"/>
        <end position="216"/>
    </location>
</feature>
<feature type="transmembrane region" description="Helical" evidence="2">
    <location>
        <begin position="217"/>
        <end position="237"/>
    </location>
</feature>
<feature type="topological domain" description="Cytoplasmic" evidence="2">
    <location>
        <begin position="238"/>
        <end position="251"/>
    </location>
</feature>
<feature type="transmembrane region" description="Helical" evidence="2">
    <location>
        <begin position="252"/>
        <end position="272"/>
    </location>
</feature>
<feature type="topological domain" description="Extracellular" evidence="2">
    <location>
        <begin position="273"/>
        <end position="289"/>
    </location>
</feature>
<feature type="transmembrane region" description="Helical" evidence="2">
    <location>
        <begin position="290"/>
        <end position="310"/>
    </location>
</feature>
<feature type="topological domain" description="Cytoplasmic" evidence="2">
    <location>
        <begin position="311"/>
        <end position="375"/>
    </location>
</feature>
<feature type="transmembrane region" description="Helical" evidence="2">
    <location>
        <begin position="376"/>
        <end position="396"/>
    </location>
</feature>
<feature type="topological domain" description="Extracellular" evidence="2">
    <location>
        <begin position="397"/>
        <end position="402"/>
    </location>
</feature>
<feature type="transmembrane region" description="Helical" evidence="2">
    <location>
        <begin position="403"/>
        <end position="423"/>
    </location>
</feature>
<feature type="topological domain" description="Cytoplasmic" evidence="2">
    <location>
        <begin position="424"/>
        <end position="543"/>
    </location>
</feature>
<feature type="region of interest" description="Disordered" evidence="3">
    <location>
        <begin position="1"/>
        <end position="175"/>
    </location>
</feature>
<feature type="region of interest" description="Disordered" evidence="3">
    <location>
        <begin position="319"/>
        <end position="342"/>
    </location>
</feature>
<feature type="region of interest" description="Disordered" evidence="3">
    <location>
        <begin position="516"/>
        <end position="543"/>
    </location>
</feature>
<feature type="compositionally biased region" description="Low complexity" evidence="3">
    <location>
        <begin position="11"/>
        <end position="26"/>
    </location>
</feature>
<feature type="compositionally biased region" description="Low complexity" evidence="3">
    <location>
        <begin position="41"/>
        <end position="55"/>
    </location>
</feature>
<feature type="compositionally biased region" description="Basic and acidic residues" evidence="3">
    <location>
        <begin position="56"/>
        <end position="66"/>
    </location>
</feature>
<feature type="compositionally biased region" description="Basic and acidic residues" evidence="3">
    <location>
        <begin position="76"/>
        <end position="104"/>
    </location>
</feature>
<feature type="compositionally biased region" description="Low complexity" evidence="3">
    <location>
        <begin position="105"/>
        <end position="116"/>
    </location>
</feature>
<feature type="compositionally biased region" description="Gly residues" evidence="3">
    <location>
        <begin position="130"/>
        <end position="140"/>
    </location>
</feature>
<keyword id="KW-0406">Ion transport</keyword>
<keyword id="KW-0472">Membrane</keyword>
<keyword id="KW-0479">Metal-binding</keyword>
<keyword id="KW-1185">Reference proteome</keyword>
<keyword id="KW-0812">Transmembrane</keyword>
<keyword id="KW-1133">Transmembrane helix</keyword>
<keyword id="KW-0813">Transport</keyword>
<keyword id="KW-0862">Zinc</keyword>
<keyword id="KW-0864">Zinc transport</keyword>
<comment type="function">
    <text evidence="1">May be involved in zinc transport from the cytoplasm to either intracellular organelles or extracellular spaces.</text>
</comment>
<comment type="subcellular location">
    <subcellularLocation>
        <location evidence="4">Membrane</location>
        <topology evidence="4">Multi-pass membrane protein</topology>
    </subcellularLocation>
</comment>
<comment type="similarity">
    <text evidence="4">Belongs to the cation diffusion facilitator (CDF) transporter (TC 2.A.4) family. SLC30A subfamily.</text>
</comment>
<gene>
    <name type="ORF">DDB_G0283629</name>
</gene>
<proteinExistence type="inferred from homology"/>
<dbReference type="EMBL" id="AAFI02000056">
    <property type="protein sequence ID" value="EAL65581.1"/>
    <property type="molecule type" value="Genomic_DNA"/>
</dbReference>
<dbReference type="RefSeq" id="XP_638925.1">
    <property type="nucleotide sequence ID" value="XM_633833.1"/>
</dbReference>
<dbReference type="SMR" id="Q54QU8"/>
<dbReference type="FunCoup" id="Q54QU8">
    <property type="interactions" value="3"/>
</dbReference>
<dbReference type="STRING" id="44689.Q54QU8"/>
<dbReference type="PaxDb" id="44689-DDB0238287"/>
<dbReference type="EnsemblProtists" id="EAL65581">
    <property type="protein sequence ID" value="EAL65581"/>
    <property type="gene ID" value="DDB_G0283629"/>
</dbReference>
<dbReference type="GeneID" id="8624164"/>
<dbReference type="KEGG" id="ddi:DDB_G0283629"/>
<dbReference type="dictyBase" id="DDB_G0283629">
    <property type="gene designation" value="zntA"/>
</dbReference>
<dbReference type="VEuPathDB" id="AmoebaDB:DDB_G0283629"/>
<dbReference type="eggNOG" id="KOG1482">
    <property type="taxonomic scope" value="Eukaryota"/>
</dbReference>
<dbReference type="HOGENOM" id="CLU_013430_0_1_1"/>
<dbReference type="InParanoid" id="Q54QU8"/>
<dbReference type="OMA" id="NGLHTWS"/>
<dbReference type="PhylomeDB" id="Q54QU8"/>
<dbReference type="Reactome" id="R-DDI-264876">
    <property type="pathway name" value="Insulin processing"/>
</dbReference>
<dbReference type="Reactome" id="R-DDI-435368">
    <property type="pathway name" value="Zinc efflux and compartmentalization by the SLC30 family"/>
</dbReference>
<dbReference type="PRO" id="PR:Q54QU8"/>
<dbReference type="Proteomes" id="UP000002195">
    <property type="component" value="Chromosome 4"/>
</dbReference>
<dbReference type="GO" id="GO:0000331">
    <property type="term" value="C:contractile vacuole"/>
    <property type="evidence" value="ECO:0000314"/>
    <property type="project" value="dictyBase"/>
</dbReference>
<dbReference type="GO" id="GO:0140220">
    <property type="term" value="C:pathogen-containing vacuole"/>
    <property type="evidence" value="ECO:0000314"/>
    <property type="project" value="dictyBase"/>
</dbReference>
<dbReference type="GO" id="GO:0005886">
    <property type="term" value="C:plasma membrane"/>
    <property type="evidence" value="ECO:0000318"/>
    <property type="project" value="GO_Central"/>
</dbReference>
<dbReference type="GO" id="GO:0046872">
    <property type="term" value="F:metal ion binding"/>
    <property type="evidence" value="ECO:0007669"/>
    <property type="project" value="UniProtKB-KW"/>
</dbReference>
<dbReference type="GO" id="GO:0005385">
    <property type="term" value="F:zinc ion transmembrane transporter activity"/>
    <property type="evidence" value="ECO:0000250"/>
    <property type="project" value="dictyBase"/>
</dbReference>
<dbReference type="GO" id="GO:0042742">
    <property type="term" value="P:defense response to bacterium"/>
    <property type="evidence" value="ECO:0000314"/>
    <property type="project" value="dictyBase"/>
</dbReference>
<dbReference type="GO" id="GO:0071577">
    <property type="term" value="P:zinc ion transmembrane transport"/>
    <property type="evidence" value="ECO:0000318"/>
    <property type="project" value="GO_Central"/>
</dbReference>
<dbReference type="GO" id="GO:0006829">
    <property type="term" value="P:zinc ion transport"/>
    <property type="evidence" value="ECO:0000315"/>
    <property type="project" value="dictyBase"/>
</dbReference>
<dbReference type="Gene3D" id="1.20.1510.10">
    <property type="entry name" value="Cation efflux protein transmembrane domain"/>
    <property type="match status" value="1"/>
</dbReference>
<dbReference type="InterPro" id="IPR002524">
    <property type="entry name" value="Cation_efflux"/>
</dbReference>
<dbReference type="InterPro" id="IPR036837">
    <property type="entry name" value="Cation_efflux_CTD_sf"/>
</dbReference>
<dbReference type="InterPro" id="IPR027469">
    <property type="entry name" value="Cation_efflux_TMD_sf"/>
</dbReference>
<dbReference type="InterPro" id="IPR050681">
    <property type="entry name" value="CDF/SLC30A"/>
</dbReference>
<dbReference type="NCBIfam" id="TIGR01297">
    <property type="entry name" value="CDF"/>
    <property type="match status" value="1"/>
</dbReference>
<dbReference type="PANTHER" id="PTHR11562">
    <property type="entry name" value="CATION EFFLUX PROTEIN/ ZINC TRANSPORTER"/>
    <property type="match status" value="1"/>
</dbReference>
<dbReference type="PANTHER" id="PTHR11562:SF17">
    <property type="entry name" value="RE54080P-RELATED"/>
    <property type="match status" value="1"/>
</dbReference>
<dbReference type="Pfam" id="PF01545">
    <property type="entry name" value="Cation_efflux"/>
    <property type="match status" value="1"/>
</dbReference>
<dbReference type="SUPFAM" id="SSF160240">
    <property type="entry name" value="Cation efflux protein cytoplasmic domain-like"/>
    <property type="match status" value="1"/>
</dbReference>
<dbReference type="SUPFAM" id="SSF161111">
    <property type="entry name" value="Cation efflux protein transmembrane domain-like"/>
    <property type="match status" value="1"/>
</dbReference>
<sequence>MENFKNNELESSPIINKNNSSHSINNEDNNYYSHNLEHNDNNNNDNNNTITNSHINNHDHKHNHEHEHKHKHNHDHNHDHDHNHEEEYGHGNELEHNNDQEHNVGNKNLLTNNNNQSKKKKHGHSHGGGEDGSSSGGGGGRHGHGHSHGGGSGSDHNHGSSDEDDEESKPLNQLRNLDSKKKARYSLILALTLTTIFMVGEIVGGYFANSLAIMTDAAHLLTDIGAMFLSLFAMWISQHPPTSSMSFGFHRAEILGALVSVLMIWALTGVLVYEAIQRILYPPDAVDGKIMFIIASCGLFINIIDAIILHWGSGGHGHSHGGGHGHSHGIGGGTQKKKSKKNRLLNNQGQDIEDLGGENGKNKKGVRNINVHSAYIHVLGDCFQSIGVMVASCIIWVHPHWKIADPITTLIFSVIVLGTTIKLLRESLGVLMEGVPPEIDVSEVKGDLSEIEGVTEVHDLHIWSITLGRPALSVHLTILPTIDPEEILSIANKILLEDYEINHTTIQIEKPLVKDKCKDHSCPPPKPKKKKIKNDNLSSPPNQ</sequence>
<evidence type="ECO:0000250" key="1"/>
<evidence type="ECO:0000255" key="2"/>
<evidence type="ECO:0000256" key="3">
    <source>
        <dbReference type="SAM" id="MobiDB-lite"/>
    </source>
</evidence>
<evidence type="ECO:0000305" key="4"/>
<protein>
    <recommendedName>
        <fullName>Probable zinc transporter protein DDB_G0283629</fullName>
    </recommendedName>
</protein>
<name>Y3629_DICDI</name>
<accession>Q54QU8</accession>
<organism>
    <name type="scientific">Dictyostelium discoideum</name>
    <name type="common">Social amoeba</name>
    <dbReference type="NCBI Taxonomy" id="44689"/>
    <lineage>
        <taxon>Eukaryota</taxon>
        <taxon>Amoebozoa</taxon>
        <taxon>Evosea</taxon>
        <taxon>Eumycetozoa</taxon>
        <taxon>Dictyostelia</taxon>
        <taxon>Dictyosteliales</taxon>
        <taxon>Dictyosteliaceae</taxon>
        <taxon>Dictyostelium</taxon>
    </lineage>
</organism>